<protein>
    <recommendedName>
        <fullName>UPF0337 protein M6_Spy1715</fullName>
    </recommendedName>
</protein>
<reference key="1">
    <citation type="journal article" date="2004" name="J. Infect. Dis.">
        <title>Progress toward characterization of the group A Streptococcus metagenome: complete genome sequence of a macrolide-resistant serotype M6 strain.</title>
        <authorList>
            <person name="Banks D.J."/>
            <person name="Porcella S.F."/>
            <person name="Barbian K.D."/>
            <person name="Beres S.B."/>
            <person name="Philips L.E."/>
            <person name="Voyich J.M."/>
            <person name="DeLeo F.R."/>
            <person name="Martin J.M."/>
            <person name="Somerville G.A."/>
            <person name="Musser J.M."/>
        </authorList>
    </citation>
    <scope>NUCLEOTIDE SEQUENCE [LARGE SCALE GENOMIC DNA]</scope>
    <source>
        <strain>ATCC BAA-946 / MGAS10394</strain>
    </source>
</reference>
<proteinExistence type="inferred from homology"/>
<sequence>MSEEKLKSKIEQASGGLKEGAGKLTGDKELEAKGFVEKTIAKGKELADDAKEAVEGAVDAVKEKLK</sequence>
<comment type="similarity">
    <text evidence="2">Belongs to the UPF0337 (CsbD) family.</text>
</comment>
<evidence type="ECO:0000256" key="1">
    <source>
        <dbReference type="SAM" id="MobiDB-lite"/>
    </source>
</evidence>
<evidence type="ECO:0000305" key="2"/>
<dbReference type="EMBL" id="CP000003">
    <property type="protein sequence ID" value="AAT87850.1"/>
    <property type="molecule type" value="Genomic_DNA"/>
</dbReference>
<dbReference type="RefSeq" id="WP_002982507.1">
    <property type="nucleotide sequence ID" value="NC_006086.1"/>
</dbReference>
<dbReference type="SMR" id="Q5X9R3"/>
<dbReference type="KEGG" id="spa:M6_Spy1715"/>
<dbReference type="HOGENOM" id="CLU_135567_0_0_9"/>
<dbReference type="Proteomes" id="UP000001167">
    <property type="component" value="Chromosome"/>
</dbReference>
<dbReference type="Gene3D" id="1.10.1470.10">
    <property type="entry name" value="YjbJ"/>
    <property type="match status" value="1"/>
</dbReference>
<dbReference type="InterPro" id="IPR008462">
    <property type="entry name" value="CsbD"/>
</dbReference>
<dbReference type="InterPro" id="IPR036629">
    <property type="entry name" value="YjbJ_sf"/>
</dbReference>
<dbReference type="Pfam" id="PF05532">
    <property type="entry name" value="CsbD"/>
    <property type="match status" value="1"/>
</dbReference>
<dbReference type="SUPFAM" id="SSF69047">
    <property type="entry name" value="Hypothetical protein YjbJ"/>
    <property type="match status" value="1"/>
</dbReference>
<feature type="chain" id="PRO_0000210056" description="UPF0337 protein M6_Spy1715">
    <location>
        <begin position="1"/>
        <end position="66"/>
    </location>
</feature>
<feature type="region of interest" description="Disordered" evidence="1">
    <location>
        <begin position="1"/>
        <end position="23"/>
    </location>
</feature>
<feature type="compositionally biased region" description="Basic and acidic residues" evidence="1">
    <location>
        <begin position="1"/>
        <end position="10"/>
    </location>
</feature>
<name>Y1715_STRP6</name>
<gene>
    <name type="ordered locus">M6_Spy1715</name>
</gene>
<accession>Q5X9R3</accession>
<organism>
    <name type="scientific">Streptococcus pyogenes serotype M6 (strain ATCC BAA-946 / MGAS10394)</name>
    <dbReference type="NCBI Taxonomy" id="286636"/>
    <lineage>
        <taxon>Bacteria</taxon>
        <taxon>Bacillati</taxon>
        <taxon>Bacillota</taxon>
        <taxon>Bacilli</taxon>
        <taxon>Lactobacillales</taxon>
        <taxon>Streptococcaceae</taxon>
        <taxon>Streptococcus</taxon>
    </lineage>
</organism>